<organism>
    <name type="scientific">Cycas revoluta</name>
    <name type="common">Sago palm</name>
    <dbReference type="NCBI Taxonomy" id="3396"/>
    <lineage>
        <taxon>Eukaryota</taxon>
        <taxon>Viridiplantae</taxon>
        <taxon>Streptophyta</taxon>
        <taxon>Embryophyta</taxon>
        <taxon>Tracheophyta</taxon>
        <taxon>Spermatophyta</taxon>
        <taxon>Cycadidae</taxon>
        <taxon>Cycadales</taxon>
        <taxon>Cycadaceae</taxon>
        <taxon>Cycas</taxon>
    </lineage>
</organism>
<reference key="1">
    <citation type="journal article" date="2000" name="Mol. Biol. Evol.">
        <title>Error, bias, and long-branch attraction in data for two chloroplast photosystem genes in seed plants.</title>
        <authorList>
            <person name="Sanderson M.J."/>
            <person name="Wojciechowski M.F."/>
            <person name="Hu J.-M."/>
            <person name="Sher Khan T."/>
            <person name="Brady S.G."/>
        </authorList>
    </citation>
    <scope>NUCLEOTIDE SEQUENCE [GENOMIC DNA]</scope>
</reference>
<feature type="chain" id="PRO_0000088544" description="Photosystem I P700 chlorophyll a apoprotein A1">
    <location>
        <begin position="1" status="less than"/>
        <end position="717" status="greater than"/>
    </location>
</feature>
<feature type="transmembrane region" description="Helical; Name=I" evidence="1">
    <location>
        <begin position="59"/>
        <end position="82"/>
    </location>
</feature>
<feature type="transmembrane region" description="Helical; Name=II" evidence="1">
    <location>
        <begin position="145"/>
        <end position="168"/>
    </location>
</feature>
<feature type="transmembrane region" description="Helical; Name=III" evidence="1">
    <location>
        <begin position="184"/>
        <end position="208"/>
    </location>
</feature>
<feature type="transmembrane region" description="Helical; Name=IV" evidence="1">
    <location>
        <begin position="280"/>
        <end position="298"/>
    </location>
</feature>
<feature type="transmembrane region" description="Helical; Name=V" evidence="1">
    <location>
        <begin position="335"/>
        <end position="358"/>
    </location>
</feature>
<feature type="transmembrane region" description="Helical; Name=VI" evidence="1">
    <location>
        <begin position="374"/>
        <end position="400"/>
    </location>
</feature>
<feature type="transmembrane region" description="Helical; Name=VII" evidence="1">
    <location>
        <begin position="422"/>
        <end position="444"/>
    </location>
</feature>
<feature type="transmembrane region" description="Helical; Name=VIII" evidence="1">
    <location>
        <begin position="520"/>
        <end position="538"/>
    </location>
</feature>
<feature type="transmembrane region" description="Helical; Name=IX" evidence="1">
    <location>
        <begin position="578"/>
        <end position="599"/>
    </location>
</feature>
<feature type="transmembrane region" description="Helical; Name=X" evidence="1">
    <location>
        <begin position="653"/>
        <end position="675"/>
    </location>
</feature>
<feature type="transmembrane region" description="Helical; Name=XI" evidence="1">
    <location>
        <begin position="713"/>
        <end position="717" status="greater than"/>
    </location>
</feature>
<feature type="binding site" evidence="1">
    <location>
        <position position="562"/>
    </location>
    <ligand>
        <name>[4Fe-4S] cluster</name>
        <dbReference type="ChEBI" id="CHEBI:49883"/>
        <note>ligand shared between dimeric partners</note>
    </ligand>
</feature>
<feature type="binding site" evidence="1">
    <location>
        <position position="571"/>
    </location>
    <ligand>
        <name>[4Fe-4S] cluster</name>
        <dbReference type="ChEBI" id="CHEBI:49883"/>
        <note>ligand shared between dimeric partners</note>
    </ligand>
</feature>
<feature type="binding site" description="axial binding residue" evidence="1">
    <location>
        <position position="664"/>
    </location>
    <ligand>
        <name>chlorophyll a'</name>
        <dbReference type="ChEBI" id="CHEBI:189419"/>
        <label>A1</label>
    </ligand>
    <ligandPart>
        <name>Mg</name>
        <dbReference type="ChEBI" id="CHEBI:25107"/>
    </ligandPart>
</feature>
<feature type="binding site" description="axial binding residue" evidence="1">
    <location>
        <position position="672"/>
    </location>
    <ligand>
        <name>chlorophyll a</name>
        <dbReference type="ChEBI" id="CHEBI:58416"/>
        <label>A3</label>
    </ligand>
    <ligandPart>
        <name>Mg</name>
        <dbReference type="ChEBI" id="CHEBI:25107"/>
    </ligandPart>
</feature>
<feature type="binding site" evidence="1">
    <location>
        <position position="680"/>
    </location>
    <ligand>
        <name>chlorophyll a</name>
        <dbReference type="ChEBI" id="CHEBI:58416"/>
        <label>A3</label>
    </ligand>
</feature>
<feature type="binding site" evidence="1">
    <location>
        <position position="681"/>
    </location>
    <ligand>
        <name>phylloquinone</name>
        <dbReference type="ChEBI" id="CHEBI:18067"/>
        <label>A</label>
    </ligand>
</feature>
<feature type="non-terminal residue">
    <location>
        <position position="1"/>
    </location>
</feature>
<feature type="non-terminal residue">
    <location>
        <position position="717"/>
    </location>
</feature>
<gene>
    <name evidence="1" type="primary">psaA</name>
</gene>
<sequence length="717" mass="79354">IVVEMDPIKTSFEKWAKPGHFSXTLXKGPNTTTWIWNLHADAHDFGSHTNDLEEISRKVFRAHFGQLAIILIWLSGMYFHGARFSNYEAWLSDPTHIKPSAQVVWPIVGQEILNGDVGGGSRGIQITSGLFQIWRASGITSELQLYCTAIGALIFAALMLFAGWFHYHKAAPKLAWFQDVESMLNHHLAGLLGLGSLSWAGHQVHVSLPINQLLDAGVDPKEIPLPHEFISNRDLLAQLYPSFAEGLTPLFTLNWSEYSEFLTFRGGLNPVTGGLWLTDTAHHHLAIAILFLIAGHMYRTNWGIGHSLKEILETHKGPFTGEGHKGLYEILTTSWHAQLALNLAMLGSLTIVVAHHMYSMPPYPYLAIDYGTQLSLFTHHMWIGGFLIVGAAAHAAIFMVRDYDPTTQYNNLLDRVLRHRDAIVSHLNWACIFLGFHSFGLYIHNDTMSALGRPQDMFSDTAIQLQPIFAQWVQNTHALAPGSTAPDATASTSLTWGGGDLVAVGGKVALLPIPLGTADFLVHHIHAFTIHVTVLILLKGVLFARSSRLIPDKANLGFRFPCDGPGRGGTCQVSAWDHVFLGLFWMYNAISVVIFHFSWKMQSDVWGSISDQGMVTHITGGNFAQSSITINGWLRDFLWAQASQVIQSYGSSLSAYGLLFLGAHXVWAFSLMFLFSGRGYWQELIESIVWAHNKLEVAPVIQPRALSIVQGRAVGVA</sequence>
<evidence type="ECO:0000255" key="1">
    <source>
        <dbReference type="HAMAP-Rule" id="MF_00458"/>
    </source>
</evidence>
<dbReference type="EC" id="1.97.1.12" evidence="1"/>
<dbReference type="EMBL" id="AF180015">
    <property type="protein sequence ID" value="AAF29816.1"/>
    <property type="molecule type" value="Genomic_DNA"/>
</dbReference>
<dbReference type="GO" id="GO:0009535">
    <property type="term" value="C:chloroplast thylakoid membrane"/>
    <property type="evidence" value="ECO:0007669"/>
    <property type="project" value="UniProtKB-SubCell"/>
</dbReference>
<dbReference type="GO" id="GO:0009522">
    <property type="term" value="C:photosystem I"/>
    <property type="evidence" value="ECO:0007669"/>
    <property type="project" value="UniProtKB-KW"/>
</dbReference>
<dbReference type="GO" id="GO:0051539">
    <property type="term" value="F:4 iron, 4 sulfur cluster binding"/>
    <property type="evidence" value="ECO:0007669"/>
    <property type="project" value="UniProtKB-KW"/>
</dbReference>
<dbReference type="GO" id="GO:0016168">
    <property type="term" value="F:chlorophyll binding"/>
    <property type="evidence" value="ECO:0007669"/>
    <property type="project" value="UniProtKB-KW"/>
</dbReference>
<dbReference type="GO" id="GO:0046872">
    <property type="term" value="F:metal ion binding"/>
    <property type="evidence" value="ECO:0007669"/>
    <property type="project" value="UniProtKB-KW"/>
</dbReference>
<dbReference type="GO" id="GO:0016491">
    <property type="term" value="F:oxidoreductase activity"/>
    <property type="evidence" value="ECO:0007669"/>
    <property type="project" value="UniProtKB-KW"/>
</dbReference>
<dbReference type="GO" id="GO:0015979">
    <property type="term" value="P:photosynthesis"/>
    <property type="evidence" value="ECO:0007669"/>
    <property type="project" value="UniProtKB-KW"/>
</dbReference>
<dbReference type="FunFam" id="1.20.1130.10:FF:000001">
    <property type="entry name" value="Photosystem I P700 chlorophyll a apoprotein A2"/>
    <property type="match status" value="1"/>
</dbReference>
<dbReference type="Gene3D" id="1.20.1130.10">
    <property type="entry name" value="Photosystem I PsaA/PsaB"/>
    <property type="match status" value="1"/>
</dbReference>
<dbReference type="HAMAP" id="MF_00458">
    <property type="entry name" value="PSI_PsaA"/>
    <property type="match status" value="1"/>
</dbReference>
<dbReference type="InterPro" id="IPR006243">
    <property type="entry name" value="PSI_PsaA"/>
</dbReference>
<dbReference type="InterPro" id="IPR001280">
    <property type="entry name" value="PSI_PsaA/B"/>
</dbReference>
<dbReference type="InterPro" id="IPR020586">
    <property type="entry name" value="PSI_PsaA/B_CS"/>
</dbReference>
<dbReference type="InterPro" id="IPR036408">
    <property type="entry name" value="PSI_PsaA/B_sf"/>
</dbReference>
<dbReference type="NCBIfam" id="TIGR01335">
    <property type="entry name" value="psaA"/>
    <property type="match status" value="1"/>
</dbReference>
<dbReference type="PANTHER" id="PTHR30128">
    <property type="entry name" value="OUTER MEMBRANE PROTEIN, OMPA-RELATED"/>
    <property type="match status" value="1"/>
</dbReference>
<dbReference type="PANTHER" id="PTHR30128:SF19">
    <property type="entry name" value="PHOTOSYSTEM I P700 CHLOROPHYLL A APOPROTEIN A1-RELATED"/>
    <property type="match status" value="1"/>
</dbReference>
<dbReference type="Pfam" id="PF00223">
    <property type="entry name" value="PsaA_PsaB"/>
    <property type="match status" value="1"/>
</dbReference>
<dbReference type="PIRSF" id="PIRSF002905">
    <property type="entry name" value="PSI_A"/>
    <property type="match status" value="1"/>
</dbReference>
<dbReference type="PRINTS" id="PR00257">
    <property type="entry name" value="PHOTSYSPSAAB"/>
</dbReference>
<dbReference type="SUPFAM" id="SSF81558">
    <property type="entry name" value="Photosystem I subunits PsaA/PsaB"/>
    <property type="match status" value="1"/>
</dbReference>
<dbReference type="PROSITE" id="PS00419">
    <property type="entry name" value="PHOTOSYSTEM_I_PSAAB"/>
    <property type="match status" value="1"/>
</dbReference>
<name>PSAA_CYCRE</name>
<protein>
    <recommendedName>
        <fullName evidence="1">Photosystem I P700 chlorophyll a apoprotein A1</fullName>
        <ecNumber evidence="1">1.97.1.12</ecNumber>
    </recommendedName>
    <alternativeName>
        <fullName evidence="1">PSI-A</fullName>
    </alternativeName>
    <alternativeName>
        <fullName evidence="1">PsaA</fullName>
    </alternativeName>
</protein>
<accession>Q9MUK0</accession>
<keyword id="KW-0004">4Fe-4S</keyword>
<keyword id="KW-0148">Chlorophyll</keyword>
<keyword id="KW-0150">Chloroplast</keyword>
<keyword id="KW-0157">Chromophore</keyword>
<keyword id="KW-0249">Electron transport</keyword>
<keyword id="KW-0408">Iron</keyword>
<keyword id="KW-0411">Iron-sulfur</keyword>
<keyword id="KW-0460">Magnesium</keyword>
<keyword id="KW-0472">Membrane</keyword>
<keyword id="KW-0479">Metal-binding</keyword>
<keyword id="KW-0560">Oxidoreductase</keyword>
<keyword id="KW-0602">Photosynthesis</keyword>
<keyword id="KW-0603">Photosystem I</keyword>
<keyword id="KW-0934">Plastid</keyword>
<keyword id="KW-0793">Thylakoid</keyword>
<keyword id="KW-0812">Transmembrane</keyword>
<keyword id="KW-1133">Transmembrane helix</keyword>
<keyword id="KW-0813">Transport</keyword>
<geneLocation type="chloroplast"/>
<proteinExistence type="inferred from homology"/>
<comment type="function">
    <text>PsaA and PsaB bind P700, the primary electron donor of photosystem I (PSI), as well as the electron acceptors A0, A1 and FX. PSI is a plastocyanin-ferredoxin oxidoreductase, converting photonic excitation into a charge separation, which transfers an electron from the donor P700 chlorophyll pair to the spectroscopically characterized acceptors A0, A1, FX, FA and FB in turn. Oxidized P700 is reduced on the lumenal side of the thylakoid membrane by plastocyanin.</text>
</comment>
<comment type="catalytic activity">
    <reaction evidence="1">
        <text>reduced [plastocyanin] + hnu + oxidized [2Fe-2S]-[ferredoxin] = oxidized [plastocyanin] + reduced [2Fe-2S]-[ferredoxin]</text>
        <dbReference type="Rhea" id="RHEA:30407"/>
        <dbReference type="Rhea" id="RHEA-COMP:10000"/>
        <dbReference type="Rhea" id="RHEA-COMP:10001"/>
        <dbReference type="Rhea" id="RHEA-COMP:10039"/>
        <dbReference type="Rhea" id="RHEA-COMP:10040"/>
        <dbReference type="ChEBI" id="CHEBI:29036"/>
        <dbReference type="ChEBI" id="CHEBI:30212"/>
        <dbReference type="ChEBI" id="CHEBI:33737"/>
        <dbReference type="ChEBI" id="CHEBI:33738"/>
        <dbReference type="ChEBI" id="CHEBI:49552"/>
        <dbReference type="EC" id="1.97.1.12"/>
    </reaction>
</comment>
<comment type="cofactor">
    <text evidence="1">P700 is a chlorophyll a/chlorophyll a' dimer, A0 is one or more chlorophyll a, A1 is one or both phylloquinones and FX is a shared 4Fe-4S iron-sulfur center.</text>
</comment>
<comment type="subunit">
    <text evidence="1">The PsaA/B heterodimer binds the P700 chlorophyll special pair and subsequent electron acceptors. PSI consists of a core antenna complex that captures photons, and an electron transfer chain that converts photonic excitation into a charge separation. The eukaryotic PSI reaction center is composed of at least 11 subunits.</text>
</comment>
<comment type="subcellular location">
    <subcellularLocation>
        <location evidence="1">Plastid</location>
        <location evidence="1">Chloroplast thylakoid membrane</location>
        <topology evidence="1">Multi-pass membrane protein</topology>
    </subcellularLocation>
</comment>
<comment type="similarity">
    <text evidence="1">Belongs to the PsaA/PsaB family.</text>
</comment>